<sequence length="294" mass="30965">MINGSIVALITPMNSDGSIDFASLERLVEFHIDQGTDAIVAVGTTGESATLPMSEHVTVVAQTVKFAAGRIPVIGGNGANATAEAIELTKSLSKVGVAGMLGVTPYYNKPTPKGLIAHYKAVAASTDIPQILYNVPGRTAVDMQPETVAELVGVSNIIGVKEATGDIARVKRLRELCGNDFKLYSGDDATAREFLLLGGNGVISVANNIVPKAFKAMCDAALAGNAELALSLDTPLRGLYSTLFCEANPIPVKWAAHRMGLIKCGHIRLPLTELSEQCHGLLIDAMTRAQIEVK</sequence>
<evidence type="ECO:0000255" key="1">
    <source>
        <dbReference type="HAMAP-Rule" id="MF_00418"/>
    </source>
</evidence>
<evidence type="ECO:0000305" key="2"/>
<reference key="1">
    <citation type="submission" date="2007-04" db="EMBL/GenBank/DDBJ databases">
        <title>Complete sequence of Shewanella putrefaciens CN-32.</title>
        <authorList>
            <consortium name="US DOE Joint Genome Institute"/>
            <person name="Copeland A."/>
            <person name="Lucas S."/>
            <person name="Lapidus A."/>
            <person name="Barry K."/>
            <person name="Detter J.C."/>
            <person name="Glavina del Rio T."/>
            <person name="Hammon N."/>
            <person name="Israni S."/>
            <person name="Dalin E."/>
            <person name="Tice H."/>
            <person name="Pitluck S."/>
            <person name="Chain P."/>
            <person name="Malfatti S."/>
            <person name="Shin M."/>
            <person name="Vergez L."/>
            <person name="Schmutz J."/>
            <person name="Larimer F."/>
            <person name="Land M."/>
            <person name="Hauser L."/>
            <person name="Kyrpides N."/>
            <person name="Mikhailova N."/>
            <person name="Romine M.F."/>
            <person name="Fredrickson J."/>
            <person name="Tiedje J."/>
            <person name="Richardson P."/>
        </authorList>
    </citation>
    <scope>NUCLEOTIDE SEQUENCE [LARGE SCALE GENOMIC DNA]</scope>
    <source>
        <strain>CN-32 / ATCC BAA-453</strain>
    </source>
</reference>
<organism>
    <name type="scientific">Shewanella putrefaciens (strain CN-32 / ATCC BAA-453)</name>
    <dbReference type="NCBI Taxonomy" id="319224"/>
    <lineage>
        <taxon>Bacteria</taxon>
        <taxon>Pseudomonadati</taxon>
        <taxon>Pseudomonadota</taxon>
        <taxon>Gammaproteobacteria</taxon>
        <taxon>Alteromonadales</taxon>
        <taxon>Shewanellaceae</taxon>
        <taxon>Shewanella</taxon>
    </lineage>
</organism>
<feature type="chain" id="PRO_1000050266" description="4-hydroxy-tetrahydrodipicolinate synthase">
    <location>
        <begin position="1"/>
        <end position="294"/>
    </location>
</feature>
<feature type="active site" description="Proton donor/acceptor" evidence="1">
    <location>
        <position position="133"/>
    </location>
</feature>
<feature type="active site" description="Schiff-base intermediate with substrate" evidence="1">
    <location>
        <position position="161"/>
    </location>
</feature>
<feature type="binding site" evidence="1">
    <location>
        <position position="45"/>
    </location>
    <ligand>
        <name>pyruvate</name>
        <dbReference type="ChEBI" id="CHEBI:15361"/>
    </ligand>
</feature>
<feature type="binding site" evidence="1">
    <location>
        <position position="203"/>
    </location>
    <ligand>
        <name>pyruvate</name>
        <dbReference type="ChEBI" id="CHEBI:15361"/>
    </ligand>
</feature>
<feature type="site" description="Part of a proton relay during catalysis" evidence="1">
    <location>
        <position position="44"/>
    </location>
</feature>
<feature type="site" description="Part of a proton relay during catalysis" evidence="1">
    <location>
        <position position="107"/>
    </location>
</feature>
<gene>
    <name evidence="1" type="primary">dapA</name>
    <name type="ordered locus">Sputcn32_1702</name>
</gene>
<protein>
    <recommendedName>
        <fullName evidence="1">4-hydroxy-tetrahydrodipicolinate synthase</fullName>
        <shortName evidence="1">HTPA synthase</shortName>
        <ecNumber evidence="1">4.3.3.7</ecNumber>
    </recommendedName>
</protein>
<name>DAPA_SHEPC</name>
<proteinExistence type="inferred from homology"/>
<dbReference type="EC" id="4.3.3.7" evidence="1"/>
<dbReference type="EMBL" id="CP000681">
    <property type="protein sequence ID" value="ABP75427.1"/>
    <property type="molecule type" value="Genomic_DNA"/>
</dbReference>
<dbReference type="SMR" id="A4Y644"/>
<dbReference type="STRING" id="319224.Sputcn32_1702"/>
<dbReference type="KEGG" id="spc:Sputcn32_1702"/>
<dbReference type="eggNOG" id="COG0329">
    <property type="taxonomic scope" value="Bacteria"/>
</dbReference>
<dbReference type="HOGENOM" id="CLU_049343_7_1_6"/>
<dbReference type="UniPathway" id="UPA00034">
    <property type="reaction ID" value="UER00017"/>
</dbReference>
<dbReference type="GO" id="GO:0005829">
    <property type="term" value="C:cytosol"/>
    <property type="evidence" value="ECO:0007669"/>
    <property type="project" value="TreeGrafter"/>
</dbReference>
<dbReference type="GO" id="GO:0008840">
    <property type="term" value="F:4-hydroxy-tetrahydrodipicolinate synthase activity"/>
    <property type="evidence" value="ECO:0007669"/>
    <property type="project" value="UniProtKB-UniRule"/>
</dbReference>
<dbReference type="GO" id="GO:0019877">
    <property type="term" value="P:diaminopimelate biosynthetic process"/>
    <property type="evidence" value="ECO:0007669"/>
    <property type="project" value="UniProtKB-UniRule"/>
</dbReference>
<dbReference type="GO" id="GO:0009089">
    <property type="term" value="P:lysine biosynthetic process via diaminopimelate"/>
    <property type="evidence" value="ECO:0007669"/>
    <property type="project" value="UniProtKB-UniRule"/>
</dbReference>
<dbReference type="CDD" id="cd00950">
    <property type="entry name" value="DHDPS"/>
    <property type="match status" value="1"/>
</dbReference>
<dbReference type="Gene3D" id="3.20.20.70">
    <property type="entry name" value="Aldolase class I"/>
    <property type="match status" value="1"/>
</dbReference>
<dbReference type="HAMAP" id="MF_00418">
    <property type="entry name" value="DapA"/>
    <property type="match status" value="1"/>
</dbReference>
<dbReference type="InterPro" id="IPR013785">
    <property type="entry name" value="Aldolase_TIM"/>
</dbReference>
<dbReference type="InterPro" id="IPR005263">
    <property type="entry name" value="DapA"/>
</dbReference>
<dbReference type="InterPro" id="IPR002220">
    <property type="entry name" value="DapA-like"/>
</dbReference>
<dbReference type="InterPro" id="IPR020625">
    <property type="entry name" value="Schiff_base-form_aldolases_AS"/>
</dbReference>
<dbReference type="InterPro" id="IPR020624">
    <property type="entry name" value="Schiff_base-form_aldolases_CS"/>
</dbReference>
<dbReference type="NCBIfam" id="TIGR00674">
    <property type="entry name" value="dapA"/>
    <property type="match status" value="1"/>
</dbReference>
<dbReference type="PANTHER" id="PTHR12128:SF66">
    <property type="entry name" value="4-HYDROXY-2-OXOGLUTARATE ALDOLASE, MITOCHONDRIAL"/>
    <property type="match status" value="1"/>
</dbReference>
<dbReference type="PANTHER" id="PTHR12128">
    <property type="entry name" value="DIHYDRODIPICOLINATE SYNTHASE"/>
    <property type="match status" value="1"/>
</dbReference>
<dbReference type="Pfam" id="PF00701">
    <property type="entry name" value="DHDPS"/>
    <property type="match status" value="1"/>
</dbReference>
<dbReference type="PIRSF" id="PIRSF001365">
    <property type="entry name" value="DHDPS"/>
    <property type="match status" value="1"/>
</dbReference>
<dbReference type="PRINTS" id="PR00146">
    <property type="entry name" value="DHPICSNTHASE"/>
</dbReference>
<dbReference type="SMART" id="SM01130">
    <property type="entry name" value="DHDPS"/>
    <property type="match status" value="1"/>
</dbReference>
<dbReference type="SUPFAM" id="SSF51569">
    <property type="entry name" value="Aldolase"/>
    <property type="match status" value="1"/>
</dbReference>
<dbReference type="PROSITE" id="PS00665">
    <property type="entry name" value="DHDPS_1"/>
    <property type="match status" value="1"/>
</dbReference>
<dbReference type="PROSITE" id="PS00666">
    <property type="entry name" value="DHDPS_2"/>
    <property type="match status" value="1"/>
</dbReference>
<comment type="function">
    <text evidence="1">Catalyzes the condensation of (S)-aspartate-beta-semialdehyde [(S)-ASA] and pyruvate to 4-hydroxy-tetrahydrodipicolinate (HTPA).</text>
</comment>
<comment type="catalytic activity">
    <reaction evidence="1">
        <text>L-aspartate 4-semialdehyde + pyruvate = (2S,4S)-4-hydroxy-2,3,4,5-tetrahydrodipicolinate + H2O + H(+)</text>
        <dbReference type="Rhea" id="RHEA:34171"/>
        <dbReference type="ChEBI" id="CHEBI:15361"/>
        <dbReference type="ChEBI" id="CHEBI:15377"/>
        <dbReference type="ChEBI" id="CHEBI:15378"/>
        <dbReference type="ChEBI" id="CHEBI:67139"/>
        <dbReference type="ChEBI" id="CHEBI:537519"/>
        <dbReference type="EC" id="4.3.3.7"/>
    </reaction>
</comment>
<comment type="pathway">
    <text evidence="1">Amino-acid biosynthesis; L-lysine biosynthesis via DAP pathway; (S)-tetrahydrodipicolinate from L-aspartate: step 3/4.</text>
</comment>
<comment type="subunit">
    <text evidence="1">Homotetramer; dimer of dimers.</text>
</comment>
<comment type="subcellular location">
    <subcellularLocation>
        <location evidence="1">Cytoplasm</location>
    </subcellularLocation>
</comment>
<comment type="similarity">
    <text evidence="1">Belongs to the DapA family.</text>
</comment>
<comment type="caution">
    <text evidence="2">Was originally thought to be a dihydrodipicolinate synthase (DHDPS), catalyzing the condensation of (S)-aspartate-beta-semialdehyde [(S)-ASA] and pyruvate to dihydrodipicolinate (DHDP). However, it was shown in E.coli that the product of the enzymatic reaction is not dihydrodipicolinate but in fact (4S)-4-hydroxy-2,3,4,5-tetrahydro-(2S)-dipicolinic acid (HTPA), and that the consecutive dehydration reaction leading to DHDP is not spontaneous but catalyzed by DapB.</text>
</comment>
<accession>A4Y644</accession>
<keyword id="KW-0028">Amino-acid biosynthesis</keyword>
<keyword id="KW-0963">Cytoplasm</keyword>
<keyword id="KW-0220">Diaminopimelate biosynthesis</keyword>
<keyword id="KW-0456">Lyase</keyword>
<keyword id="KW-0457">Lysine biosynthesis</keyword>
<keyword id="KW-0704">Schiff base</keyword>